<sequence>AQSFLRL</sequence>
<proteinExistence type="evidence at protein level"/>
<feature type="peptide" id="PRO_0000421480" description="Extended FMRFamide-1" evidence="3">
    <location>
        <begin position="1"/>
        <end position="7"/>
    </location>
</feature>
<feature type="modified residue" description="Leucine amide" evidence="3">
    <location>
        <position position="7"/>
    </location>
</feature>
<feature type="unsure residue" description="L or I" evidence="3">
    <location>
        <position position="5"/>
    </location>
</feature>
<feature type="unsure residue" description="L or I" evidence="3">
    <location>
        <position position="7"/>
    </location>
</feature>
<reference evidence="5" key="1">
    <citation type="journal article" date="2012" name="Syst. Biol.">
        <title>Peptidomics-based phylogeny and biogeography of Mantophasmatodea (Hexapoda).</title>
        <authorList>
            <person name="Predel R."/>
            <person name="Neupert S."/>
            <person name="Huetteroth W."/>
            <person name="Kahnt J."/>
            <person name="Waidelich D."/>
            <person name="Roth S."/>
        </authorList>
    </citation>
    <scope>PROTEIN SEQUENCE</scope>
    <scope>AMIDATION AT LEU-7</scope>
    <source>
        <tissue evidence="3">Thoracic perisympathetic organs</tissue>
    </source>
</reference>
<keyword id="KW-0027">Amidation</keyword>
<keyword id="KW-0903">Direct protein sequencing</keyword>
<keyword id="KW-0527">Neuropeptide</keyword>
<keyword id="KW-0964">Secreted</keyword>
<accession>B3A081</accession>
<evidence type="ECO:0000250" key="1">
    <source>
        <dbReference type="UniProtKB" id="P34405"/>
    </source>
</evidence>
<evidence type="ECO:0000255" key="2"/>
<evidence type="ECO:0000269" key="3">
    <source>
    </source>
</evidence>
<evidence type="ECO:0000303" key="4">
    <source>
    </source>
</evidence>
<evidence type="ECO:0000305" key="5"/>
<evidence type="ECO:0000305" key="6">
    <source>
    </source>
</evidence>
<organism>
    <name type="scientific">Lobatophasma redelinghuysense</name>
    <name type="common">Gladiator</name>
    <name type="synonym">Heel-walker</name>
    <dbReference type="NCBI Taxonomy" id="253128"/>
    <lineage>
        <taxon>Eukaryota</taxon>
        <taxon>Metazoa</taxon>
        <taxon>Ecdysozoa</taxon>
        <taxon>Arthropoda</taxon>
        <taxon>Hexapoda</taxon>
        <taxon>Insecta</taxon>
        <taxon>Pterygota</taxon>
        <taxon>Neoptera</taxon>
        <taxon>Polyneoptera</taxon>
        <taxon>Mantophasmatodea</taxon>
        <taxon>Austrophasmatidae</taxon>
        <taxon>Lobatophasma</taxon>
    </lineage>
</organism>
<dbReference type="GO" id="GO:0005576">
    <property type="term" value="C:extracellular region"/>
    <property type="evidence" value="ECO:0007669"/>
    <property type="project" value="UniProtKB-SubCell"/>
</dbReference>
<dbReference type="GO" id="GO:0007218">
    <property type="term" value="P:neuropeptide signaling pathway"/>
    <property type="evidence" value="ECO:0007669"/>
    <property type="project" value="UniProtKB-KW"/>
</dbReference>
<name>FAR1_LOBRE</name>
<comment type="function">
    <text evidence="1">FMRFamides and FMRFamide-like peptides are neuropeptides.</text>
</comment>
<comment type="subcellular location">
    <subcellularLocation>
        <location evidence="6">Secreted</location>
    </subcellularLocation>
</comment>
<comment type="similarity">
    <text evidence="2">Belongs to the FARP (FMRF amide related peptide) family.</text>
</comment>
<protein>
    <recommendedName>
        <fullName evidence="4">Extended FMRFamide-1</fullName>
        <shortName evidence="4">FMRFa-1</shortName>
    </recommendedName>
</protein>